<proteinExistence type="inferred from homology"/>
<dbReference type="EC" id="4.3.3.6" evidence="1"/>
<dbReference type="EC" id="3.5.1.2" evidence="1"/>
<dbReference type="EMBL" id="CP000046">
    <property type="protein sequence ID" value="AAW37677.1"/>
    <property type="molecule type" value="Genomic_DNA"/>
</dbReference>
<dbReference type="RefSeq" id="WP_000690439.1">
    <property type="nucleotide sequence ID" value="NZ_JBGOFO010000009.1"/>
</dbReference>
<dbReference type="SMR" id="Q5HIF4"/>
<dbReference type="KEGG" id="sac:SACOL0565"/>
<dbReference type="HOGENOM" id="CLU_069674_2_0_9"/>
<dbReference type="UniPathway" id="UPA00245"/>
<dbReference type="Proteomes" id="UP000000530">
    <property type="component" value="Chromosome"/>
</dbReference>
<dbReference type="GO" id="GO:0005829">
    <property type="term" value="C:cytosol"/>
    <property type="evidence" value="ECO:0007669"/>
    <property type="project" value="TreeGrafter"/>
</dbReference>
<dbReference type="GO" id="GO:1903600">
    <property type="term" value="C:glutaminase complex"/>
    <property type="evidence" value="ECO:0007669"/>
    <property type="project" value="TreeGrafter"/>
</dbReference>
<dbReference type="GO" id="GO:0004359">
    <property type="term" value="F:glutaminase activity"/>
    <property type="evidence" value="ECO:0007669"/>
    <property type="project" value="UniProtKB-UniRule"/>
</dbReference>
<dbReference type="GO" id="GO:0036381">
    <property type="term" value="F:pyridoxal 5'-phosphate synthase (glutamine hydrolysing) activity"/>
    <property type="evidence" value="ECO:0007669"/>
    <property type="project" value="UniProtKB-UniRule"/>
</dbReference>
<dbReference type="GO" id="GO:0006543">
    <property type="term" value="P:glutamine catabolic process"/>
    <property type="evidence" value="ECO:0007669"/>
    <property type="project" value="UniProtKB-UniRule"/>
</dbReference>
<dbReference type="GO" id="GO:0042823">
    <property type="term" value="P:pyridoxal phosphate biosynthetic process"/>
    <property type="evidence" value="ECO:0007669"/>
    <property type="project" value="UniProtKB-UniRule"/>
</dbReference>
<dbReference type="GO" id="GO:0008614">
    <property type="term" value="P:pyridoxine metabolic process"/>
    <property type="evidence" value="ECO:0007669"/>
    <property type="project" value="TreeGrafter"/>
</dbReference>
<dbReference type="CDD" id="cd01749">
    <property type="entry name" value="GATase1_PB"/>
    <property type="match status" value="1"/>
</dbReference>
<dbReference type="FunFam" id="3.40.50.880:FF:000010">
    <property type="entry name" value="uncharacterized protein LOC100176842 isoform X2"/>
    <property type="match status" value="1"/>
</dbReference>
<dbReference type="Gene3D" id="3.40.50.880">
    <property type="match status" value="1"/>
</dbReference>
<dbReference type="HAMAP" id="MF_01615">
    <property type="entry name" value="PdxT"/>
    <property type="match status" value="1"/>
</dbReference>
<dbReference type="InterPro" id="IPR029062">
    <property type="entry name" value="Class_I_gatase-like"/>
</dbReference>
<dbReference type="InterPro" id="IPR002161">
    <property type="entry name" value="PdxT/SNO"/>
</dbReference>
<dbReference type="InterPro" id="IPR021196">
    <property type="entry name" value="PdxT/SNO_CS"/>
</dbReference>
<dbReference type="NCBIfam" id="TIGR03800">
    <property type="entry name" value="PLP_synth_Pdx2"/>
    <property type="match status" value="1"/>
</dbReference>
<dbReference type="PANTHER" id="PTHR31559">
    <property type="entry name" value="PYRIDOXAL 5'-PHOSPHATE SYNTHASE SUBUNIT SNO"/>
    <property type="match status" value="1"/>
</dbReference>
<dbReference type="PANTHER" id="PTHR31559:SF0">
    <property type="entry name" value="PYRIDOXAL 5'-PHOSPHATE SYNTHASE SUBUNIT SNO1-RELATED"/>
    <property type="match status" value="1"/>
</dbReference>
<dbReference type="Pfam" id="PF01174">
    <property type="entry name" value="SNO"/>
    <property type="match status" value="1"/>
</dbReference>
<dbReference type="PIRSF" id="PIRSF005639">
    <property type="entry name" value="Glut_amidoT_SNO"/>
    <property type="match status" value="1"/>
</dbReference>
<dbReference type="SUPFAM" id="SSF52317">
    <property type="entry name" value="Class I glutamine amidotransferase-like"/>
    <property type="match status" value="1"/>
</dbReference>
<dbReference type="PROSITE" id="PS01236">
    <property type="entry name" value="PDXT_SNO_1"/>
    <property type="match status" value="1"/>
</dbReference>
<dbReference type="PROSITE" id="PS51130">
    <property type="entry name" value="PDXT_SNO_2"/>
    <property type="match status" value="1"/>
</dbReference>
<organism>
    <name type="scientific">Staphylococcus aureus (strain COL)</name>
    <dbReference type="NCBI Taxonomy" id="93062"/>
    <lineage>
        <taxon>Bacteria</taxon>
        <taxon>Bacillati</taxon>
        <taxon>Bacillota</taxon>
        <taxon>Bacilli</taxon>
        <taxon>Bacillales</taxon>
        <taxon>Staphylococcaceae</taxon>
        <taxon>Staphylococcus</taxon>
    </lineage>
</organism>
<name>PDXT_STAAC</name>
<keyword id="KW-0315">Glutamine amidotransferase</keyword>
<keyword id="KW-0378">Hydrolase</keyword>
<keyword id="KW-0456">Lyase</keyword>
<keyword id="KW-0663">Pyridoxal phosphate</keyword>
<gene>
    <name evidence="1" type="primary">pdxT</name>
    <name type="ordered locus">SACOL0565</name>
</gene>
<comment type="function">
    <text evidence="1">Catalyzes the hydrolysis of glutamine to glutamate and ammonia as part of the biosynthesis of pyridoxal 5'-phosphate. The resulting ammonia molecule is channeled to the active site of PdxS.</text>
</comment>
<comment type="catalytic activity">
    <reaction evidence="1">
        <text>aldehydo-D-ribose 5-phosphate + D-glyceraldehyde 3-phosphate + L-glutamine = pyridoxal 5'-phosphate + L-glutamate + phosphate + 3 H2O + H(+)</text>
        <dbReference type="Rhea" id="RHEA:31507"/>
        <dbReference type="ChEBI" id="CHEBI:15377"/>
        <dbReference type="ChEBI" id="CHEBI:15378"/>
        <dbReference type="ChEBI" id="CHEBI:29985"/>
        <dbReference type="ChEBI" id="CHEBI:43474"/>
        <dbReference type="ChEBI" id="CHEBI:58273"/>
        <dbReference type="ChEBI" id="CHEBI:58359"/>
        <dbReference type="ChEBI" id="CHEBI:59776"/>
        <dbReference type="ChEBI" id="CHEBI:597326"/>
        <dbReference type="EC" id="4.3.3.6"/>
    </reaction>
</comment>
<comment type="catalytic activity">
    <reaction evidence="1">
        <text>L-glutamine + H2O = L-glutamate + NH4(+)</text>
        <dbReference type="Rhea" id="RHEA:15889"/>
        <dbReference type="ChEBI" id="CHEBI:15377"/>
        <dbReference type="ChEBI" id="CHEBI:28938"/>
        <dbReference type="ChEBI" id="CHEBI:29985"/>
        <dbReference type="ChEBI" id="CHEBI:58359"/>
        <dbReference type="EC" id="3.5.1.2"/>
    </reaction>
</comment>
<comment type="pathway">
    <text evidence="1">Cofactor biosynthesis; pyridoxal 5'-phosphate biosynthesis.</text>
</comment>
<comment type="subunit">
    <text evidence="1">In the presence of PdxS, forms a dodecamer of heterodimers. Only shows activity in the heterodimer.</text>
</comment>
<comment type="similarity">
    <text evidence="1">Belongs to the glutaminase PdxT/SNO family.</text>
</comment>
<feature type="chain" id="PRO_0000135655" description="Pyridoxal 5'-phosphate synthase subunit PdxT">
    <location>
        <begin position="1"/>
        <end position="186"/>
    </location>
</feature>
<feature type="active site" description="Nucleophile" evidence="1">
    <location>
        <position position="75"/>
    </location>
</feature>
<feature type="active site" description="Charge relay system" evidence="1">
    <location>
        <position position="165"/>
    </location>
</feature>
<feature type="active site" description="Charge relay system" evidence="1">
    <location>
        <position position="167"/>
    </location>
</feature>
<feature type="binding site" evidence="1">
    <location>
        <begin position="46"/>
        <end position="48"/>
    </location>
    <ligand>
        <name>L-glutamine</name>
        <dbReference type="ChEBI" id="CHEBI:58359"/>
    </ligand>
</feature>
<feature type="binding site" evidence="1">
    <location>
        <position position="101"/>
    </location>
    <ligand>
        <name>L-glutamine</name>
        <dbReference type="ChEBI" id="CHEBI:58359"/>
    </ligand>
</feature>
<feature type="binding site" evidence="1">
    <location>
        <begin position="129"/>
        <end position="130"/>
    </location>
    <ligand>
        <name>L-glutamine</name>
        <dbReference type="ChEBI" id="CHEBI:58359"/>
    </ligand>
</feature>
<accession>Q5HIF4</accession>
<evidence type="ECO:0000255" key="1">
    <source>
        <dbReference type="HAMAP-Rule" id="MF_01615"/>
    </source>
</evidence>
<reference key="1">
    <citation type="journal article" date="2005" name="J. Bacteriol.">
        <title>Insights on evolution of virulence and resistance from the complete genome analysis of an early methicillin-resistant Staphylococcus aureus strain and a biofilm-producing methicillin-resistant Staphylococcus epidermidis strain.</title>
        <authorList>
            <person name="Gill S.R."/>
            <person name="Fouts D.E."/>
            <person name="Archer G.L."/>
            <person name="Mongodin E.F."/>
            <person name="DeBoy R.T."/>
            <person name="Ravel J."/>
            <person name="Paulsen I.T."/>
            <person name="Kolonay J.F."/>
            <person name="Brinkac L.M."/>
            <person name="Beanan M.J."/>
            <person name="Dodson R.J."/>
            <person name="Daugherty S.C."/>
            <person name="Madupu R."/>
            <person name="Angiuoli S.V."/>
            <person name="Durkin A.S."/>
            <person name="Haft D.H."/>
            <person name="Vamathevan J.J."/>
            <person name="Khouri H."/>
            <person name="Utterback T.R."/>
            <person name="Lee C."/>
            <person name="Dimitrov G."/>
            <person name="Jiang L."/>
            <person name="Qin H."/>
            <person name="Weidman J."/>
            <person name="Tran K."/>
            <person name="Kang K.H."/>
            <person name="Hance I.R."/>
            <person name="Nelson K.E."/>
            <person name="Fraser C.M."/>
        </authorList>
    </citation>
    <scope>NUCLEOTIDE SEQUENCE [LARGE SCALE GENOMIC DNA]</scope>
    <source>
        <strain>COL</strain>
    </source>
</reference>
<protein>
    <recommendedName>
        <fullName evidence="1">Pyridoxal 5'-phosphate synthase subunit PdxT</fullName>
        <ecNumber evidence="1">4.3.3.6</ecNumber>
    </recommendedName>
    <alternativeName>
        <fullName evidence="1">Pdx2</fullName>
    </alternativeName>
    <alternativeName>
        <fullName evidence="1">Pyridoxal 5'-phosphate synthase glutaminase subunit</fullName>
        <ecNumber evidence="1">3.5.1.2</ecNumber>
    </alternativeName>
</protein>
<sequence>MKIGVLALQGAVREHIRHIELSGHEGIAVKKVEQLEEIEGLILPGGESTTLRRLMNLYGFKEALQNSTLPMFGTCAGLIVLAQDIVGEEGYLNKLNITVQRNSFGRQVDSFETELDIKGIATDIEGVFIRAPHIEKVGQGVDILCKVNEKIVAVQQGKYLGVSFHPELTDDYRVTDYFINHIVKKA</sequence>